<name>RT07_PROWI</name>
<geneLocation type="mitochondrion"/>
<reference key="1">
    <citation type="journal article" date="1994" name="J. Mol. Biol.">
        <title>Complete sequence of the mitochondrial DNA of the chlorophyte alga Prototheca wickerhamii. Gene content and genome organization.</title>
        <authorList>
            <person name="Wolff G."/>
            <person name="Plante I."/>
            <person name="Lang B.F."/>
            <person name="Kueck U."/>
            <person name="Burger G."/>
        </authorList>
    </citation>
    <scope>NUCLEOTIDE SEQUENCE [GENOMIC DNA]</scope>
    <source>
        <strain>263-11</strain>
    </source>
</reference>
<gene>
    <name type="primary">RPS7</name>
</gene>
<comment type="function">
    <text evidence="1">One of the primary rRNA binding proteins, it binds directly to 18S rRNA where it nucleates assembly of the head domain of the small subunit.</text>
</comment>
<comment type="subunit">
    <text>Part of the small ribosomal subunit.</text>
</comment>
<comment type="subcellular location">
    <subcellularLocation>
        <location>Mitochondrion</location>
    </subcellularLocation>
</comment>
<comment type="similarity">
    <text evidence="2">Belongs to the universal ribosomal protein uS7 family.</text>
</comment>
<proteinExistence type="inferred from homology"/>
<dbReference type="EMBL" id="U02970">
    <property type="protein sequence ID" value="AAD12661.1"/>
    <property type="molecule type" value="Genomic_DNA"/>
</dbReference>
<dbReference type="PIR" id="T11942">
    <property type="entry name" value="T11942"/>
</dbReference>
<dbReference type="RefSeq" id="NP_042273.1">
    <property type="nucleotide sequence ID" value="NC_001613.1"/>
</dbReference>
<dbReference type="SMR" id="P46745"/>
<dbReference type="GeneID" id="802137"/>
<dbReference type="GO" id="GO:0005739">
    <property type="term" value="C:mitochondrion"/>
    <property type="evidence" value="ECO:0007669"/>
    <property type="project" value="UniProtKB-SubCell"/>
</dbReference>
<dbReference type="GO" id="GO:1990904">
    <property type="term" value="C:ribonucleoprotein complex"/>
    <property type="evidence" value="ECO:0007669"/>
    <property type="project" value="UniProtKB-KW"/>
</dbReference>
<dbReference type="GO" id="GO:0005840">
    <property type="term" value="C:ribosome"/>
    <property type="evidence" value="ECO:0007669"/>
    <property type="project" value="UniProtKB-KW"/>
</dbReference>
<dbReference type="GO" id="GO:0019843">
    <property type="term" value="F:rRNA binding"/>
    <property type="evidence" value="ECO:0007669"/>
    <property type="project" value="UniProtKB-KW"/>
</dbReference>
<dbReference type="GO" id="GO:0006412">
    <property type="term" value="P:translation"/>
    <property type="evidence" value="ECO:0007669"/>
    <property type="project" value="InterPro"/>
</dbReference>
<dbReference type="Gene3D" id="1.10.455.10">
    <property type="entry name" value="Ribosomal protein S7 domain"/>
    <property type="match status" value="1"/>
</dbReference>
<dbReference type="InterPro" id="IPR000235">
    <property type="entry name" value="Ribosomal_uS7"/>
</dbReference>
<dbReference type="InterPro" id="IPR023798">
    <property type="entry name" value="Ribosomal_uS7_dom"/>
</dbReference>
<dbReference type="InterPro" id="IPR036823">
    <property type="entry name" value="Ribosomal_uS7_dom_sf"/>
</dbReference>
<dbReference type="PANTHER" id="PTHR11205">
    <property type="entry name" value="RIBOSOMAL PROTEIN S7"/>
    <property type="match status" value="1"/>
</dbReference>
<dbReference type="Pfam" id="PF00177">
    <property type="entry name" value="Ribosomal_S7"/>
    <property type="match status" value="1"/>
</dbReference>
<dbReference type="PIRSF" id="PIRSF002122">
    <property type="entry name" value="RPS7p_RPS7a_RPS5e_RPS7o"/>
    <property type="match status" value="1"/>
</dbReference>
<dbReference type="SUPFAM" id="SSF47973">
    <property type="entry name" value="Ribosomal protein S7"/>
    <property type="match status" value="1"/>
</dbReference>
<accession>P46745</accession>
<feature type="chain" id="PRO_0000124521" description="Small ribosomal subunit protein uS7m">
    <location>
        <begin position="1"/>
        <end position="222"/>
    </location>
</feature>
<organism>
    <name type="scientific">Prototheca wickerhamii</name>
    <dbReference type="NCBI Taxonomy" id="3111"/>
    <lineage>
        <taxon>Eukaryota</taxon>
        <taxon>Viridiplantae</taxon>
        <taxon>Chlorophyta</taxon>
        <taxon>core chlorophytes</taxon>
        <taxon>Trebouxiophyceae</taxon>
        <taxon>Chlorellales</taxon>
        <taxon>Chlorellaceae</taxon>
        <taxon>Prototheca</taxon>
    </lineage>
</organism>
<evidence type="ECO:0000250" key="1"/>
<evidence type="ECO:0000305" key="2"/>
<protein>
    <recommendedName>
        <fullName evidence="2">Small ribosomal subunit protein uS7m</fullName>
    </recommendedName>
    <alternativeName>
        <fullName>Ribosomal protein S7, mitochondrial</fullName>
    </alternativeName>
</protein>
<sequence length="222" mass="25263">MNAPITQKNTAYISSDKLSLLELENSNKFINLLMVDGKKSRAIRLFYDTLVLLKRKNLKENSKKESLLGIIGQLSPKNSIEDLVNNSNKLSNNSNEEIKIPLIDNSKSDDKSNLLETISVLEVLSIALKNVTPSVELRKVRRAGNTFLIPAILSQHKANTLAIRWVIESAKKKQQNSKQNFAECLADEIYQAYLKQGKARQKRDELHSAAISNRANIRYRWW</sequence>
<keyword id="KW-0496">Mitochondrion</keyword>
<keyword id="KW-0687">Ribonucleoprotein</keyword>
<keyword id="KW-0689">Ribosomal protein</keyword>
<keyword id="KW-0694">RNA-binding</keyword>
<keyword id="KW-0699">rRNA-binding</keyword>